<dbReference type="EC" id="3.4.21.92" evidence="1"/>
<dbReference type="EMBL" id="CP000095">
    <property type="protein sequence ID" value="AAZ58744.1"/>
    <property type="molecule type" value="Genomic_DNA"/>
</dbReference>
<dbReference type="SMR" id="Q46ID4"/>
<dbReference type="STRING" id="59920.PMN2A_1254"/>
<dbReference type="MEROPS" id="S14.001"/>
<dbReference type="KEGG" id="pmn:PMN2A_1254"/>
<dbReference type="HOGENOM" id="CLU_058707_3_2_3"/>
<dbReference type="PhylomeDB" id="Q46ID4"/>
<dbReference type="Proteomes" id="UP000002535">
    <property type="component" value="Chromosome"/>
</dbReference>
<dbReference type="GO" id="GO:0005737">
    <property type="term" value="C:cytoplasm"/>
    <property type="evidence" value="ECO:0007669"/>
    <property type="project" value="UniProtKB-SubCell"/>
</dbReference>
<dbReference type="GO" id="GO:0009368">
    <property type="term" value="C:endopeptidase Clp complex"/>
    <property type="evidence" value="ECO:0007669"/>
    <property type="project" value="TreeGrafter"/>
</dbReference>
<dbReference type="GO" id="GO:0004176">
    <property type="term" value="F:ATP-dependent peptidase activity"/>
    <property type="evidence" value="ECO:0007669"/>
    <property type="project" value="InterPro"/>
</dbReference>
<dbReference type="GO" id="GO:0051117">
    <property type="term" value="F:ATPase binding"/>
    <property type="evidence" value="ECO:0007669"/>
    <property type="project" value="TreeGrafter"/>
</dbReference>
<dbReference type="GO" id="GO:0004252">
    <property type="term" value="F:serine-type endopeptidase activity"/>
    <property type="evidence" value="ECO:0007669"/>
    <property type="project" value="UniProtKB-UniRule"/>
</dbReference>
<dbReference type="GO" id="GO:0006515">
    <property type="term" value="P:protein quality control for misfolded or incompletely synthesized proteins"/>
    <property type="evidence" value="ECO:0007669"/>
    <property type="project" value="TreeGrafter"/>
</dbReference>
<dbReference type="CDD" id="cd07017">
    <property type="entry name" value="S14_ClpP_2"/>
    <property type="match status" value="1"/>
</dbReference>
<dbReference type="FunFam" id="3.90.226.10:FF:000001">
    <property type="entry name" value="ATP-dependent Clp protease proteolytic subunit"/>
    <property type="match status" value="1"/>
</dbReference>
<dbReference type="Gene3D" id="3.90.226.10">
    <property type="entry name" value="2-enoyl-CoA Hydratase, Chain A, domain 1"/>
    <property type="match status" value="1"/>
</dbReference>
<dbReference type="HAMAP" id="MF_00444">
    <property type="entry name" value="ClpP"/>
    <property type="match status" value="1"/>
</dbReference>
<dbReference type="InterPro" id="IPR001907">
    <property type="entry name" value="ClpP"/>
</dbReference>
<dbReference type="InterPro" id="IPR029045">
    <property type="entry name" value="ClpP/crotonase-like_dom_sf"/>
</dbReference>
<dbReference type="InterPro" id="IPR023562">
    <property type="entry name" value="ClpP/TepA"/>
</dbReference>
<dbReference type="InterPro" id="IPR033135">
    <property type="entry name" value="ClpP_His_AS"/>
</dbReference>
<dbReference type="NCBIfam" id="TIGR00493">
    <property type="entry name" value="clpP"/>
    <property type="match status" value="1"/>
</dbReference>
<dbReference type="NCBIfam" id="NF001368">
    <property type="entry name" value="PRK00277.1"/>
    <property type="match status" value="1"/>
</dbReference>
<dbReference type="NCBIfam" id="NF009205">
    <property type="entry name" value="PRK12553.1"/>
    <property type="match status" value="1"/>
</dbReference>
<dbReference type="PANTHER" id="PTHR10381">
    <property type="entry name" value="ATP-DEPENDENT CLP PROTEASE PROTEOLYTIC SUBUNIT"/>
    <property type="match status" value="1"/>
</dbReference>
<dbReference type="PANTHER" id="PTHR10381:SF70">
    <property type="entry name" value="ATP-DEPENDENT CLP PROTEASE PROTEOLYTIC SUBUNIT"/>
    <property type="match status" value="1"/>
</dbReference>
<dbReference type="Pfam" id="PF00574">
    <property type="entry name" value="CLP_protease"/>
    <property type="match status" value="1"/>
</dbReference>
<dbReference type="PRINTS" id="PR00127">
    <property type="entry name" value="CLPPROTEASEP"/>
</dbReference>
<dbReference type="SUPFAM" id="SSF52096">
    <property type="entry name" value="ClpP/crotonase"/>
    <property type="match status" value="1"/>
</dbReference>
<dbReference type="PROSITE" id="PS00382">
    <property type="entry name" value="CLP_PROTEASE_HIS"/>
    <property type="match status" value="1"/>
</dbReference>
<sequence>MLPTVIEQSGQGDRAFDIYSRLLRERIIFLGTDVNDQVADALVAQMLFLEADDPEKDIQLYVNSPGGSVTAGLAIYDTMQQVSPDVITICYGLAASMGAFLLSGGTKGKRLALPNSRIMIHQPLGGAQGQAVEIEIQAKEILYLKETLNSLLAEHTGQNIQKISEDTDRDHFLSPQEAVEYGLIDKVVSNLNSI</sequence>
<proteinExistence type="inferred from homology"/>
<accession>Q46ID4</accession>
<keyword id="KW-0963">Cytoplasm</keyword>
<keyword id="KW-0378">Hydrolase</keyword>
<keyword id="KW-0645">Protease</keyword>
<keyword id="KW-1185">Reference proteome</keyword>
<keyword id="KW-0720">Serine protease</keyword>
<organism>
    <name type="scientific">Prochlorococcus marinus (strain NATL2A)</name>
    <dbReference type="NCBI Taxonomy" id="59920"/>
    <lineage>
        <taxon>Bacteria</taxon>
        <taxon>Bacillati</taxon>
        <taxon>Cyanobacteriota</taxon>
        <taxon>Cyanophyceae</taxon>
        <taxon>Synechococcales</taxon>
        <taxon>Prochlorococcaceae</taxon>
        <taxon>Prochlorococcus</taxon>
    </lineage>
</organism>
<evidence type="ECO:0000255" key="1">
    <source>
        <dbReference type="HAMAP-Rule" id="MF_00444"/>
    </source>
</evidence>
<reference key="1">
    <citation type="journal article" date="2007" name="PLoS Genet.">
        <title>Patterns and implications of gene gain and loss in the evolution of Prochlorococcus.</title>
        <authorList>
            <person name="Kettler G.C."/>
            <person name="Martiny A.C."/>
            <person name="Huang K."/>
            <person name="Zucker J."/>
            <person name="Coleman M.L."/>
            <person name="Rodrigue S."/>
            <person name="Chen F."/>
            <person name="Lapidus A."/>
            <person name="Ferriera S."/>
            <person name="Johnson J."/>
            <person name="Steglich C."/>
            <person name="Church G.M."/>
            <person name="Richardson P."/>
            <person name="Chisholm S.W."/>
        </authorList>
    </citation>
    <scope>NUCLEOTIDE SEQUENCE [LARGE SCALE GENOMIC DNA]</scope>
    <source>
        <strain>NATL2A</strain>
    </source>
</reference>
<comment type="function">
    <text evidence="1">Cleaves peptides in various proteins in a process that requires ATP hydrolysis. Has a chymotrypsin-like activity. Plays a major role in the degradation of misfolded proteins.</text>
</comment>
<comment type="catalytic activity">
    <reaction evidence="1">
        <text>Hydrolysis of proteins to small peptides in the presence of ATP and magnesium. alpha-casein is the usual test substrate. In the absence of ATP, only oligopeptides shorter than five residues are hydrolyzed (such as succinyl-Leu-Tyr-|-NHMec, and Leu-Tyr-Leu-|-Tyr-Trp, in which cleavage of the -Tyr-|-Leu- and -Tyr-|-Trp bonds also occurs).</text>
        <dbReference type="EC" id="3.4.21.92"/>
    </reaction>
</comment>
<comment type="subunit">
    <text evidence="1">Fourteen ClpP subunits assemble into 2 heptameric rings which stack back to back to give a disk-like structure with a central cavity, resembling the structure of eukaryotic proteasomes.</text>
</comment>
<comment type="subcellular location">
    <subcellularLocation>
        <location evidence="1">Cytoplasm</location>
    </subcellularLocation>
</comment>
<comment type="similarity">
    <text evidence="1">Belongs to the peptidase S14 family.</text>
</comment>
<protein>
    <recommendedName>
        <fullName evidence="1">ATP-dependent Clp protease proteolytic subunit 3</fullName>
        <ecNumber evidence="1">3.4.21.92</ecNumber>
    </recommendedName>
    <alternativeName>
        <fullName evidence="1">Endopeptidase Clp 3</fullName>
    </alternativeName>
</protein>
<name>CLPP3_PROMT</name>
<gene>
    <name evidence="1" type="primary">clpP3</name>
    <name type="ordered locus">PMN2A_1254</name>
</gene>
<feature type="chain" id="PRO_0000226455" description="ATP-dependent Clp protease proteolytic subunit 3">
    <location>
        <begin position="1"/>
        <end position="194"/>
    </location>
</feature>
<feature type="active site" description="Nucleophile" evidence="1">
    <location>
        <position position="96"/>
    </location>
</feature>
<feature type="active site" evidence="1">
    <location>
        <position position="121"/>
    </location>
</feature>